<dbReference type="EMBL" id="CP000111">
    <property type="protein sequence ID" value="ABB49087.1"/>
    <property type="molecule type" value="Genomic_DNA"/>
</dbReference>
<dbReference type="RefSeq" id="WP_011375591.1">
    <property type="nucleotide sequence ID" value="NC_007577.1"/>
</dbReference>
<dbReference type="SMR" id="Q31DF8"/>
<dbReference type="STRING" id="74546.PMT9312_0026"/>
<dbReference type="KEGG" id="pmi:PMT9312_0026"/>
<dbReference type="eggNOG" id="COG0231">
    <property type="taxonomic scope" value="Bacteria"/>
</dbReference>
<dbReference type="HOGENOM" id="CLU_074944_0_1_3"/>
<dbReference type="OrthoDB" id="9801844at2"/>
<dbReference type="UniPathway" id="UPA00345"/>
<dbReference type="Proteomes" id="UP000002715">
    <property type="component" value="Chromosome"/>
</dbReference>
<dbReference type="GO" id="GO:0005737">
    <property type="term" value="C:cytoplasm"/>
    <property type="evidence" value="ECO:0007669"/>
    <property type="project" value="UniProtKB-SubCell"/>
</dbReference>
<dbReference type="GO" id="GO:0003746">
    <property type="term" value="F:translation elongation factor activity"/>
    <property type="evidence" value="ECO:0007669"/>
    <property type="project" value="UniProtKB-UniRule"/>
</dbReference>
<dbReference type="GO" id="GO:0043043">
    <property type="term" value="P:peptide biosynthetic process"/>
    <property type="evidence" value="ECO:0007669"/>
    <property type="project" value="InterPro"/>
</dbReference>
<dbReference type="CDD" id="cd04470">
    <property type="entry name" value="S1_EF-P_repeat_1"/>
    <property type="match status" value="1"/>
</dbReference>
<dbReference type="CDD" id="cd05794">
    <property type="entry name" value="S1_EF-P_repeat_2"/>
    <property type="match status" value="1"/>
</dbReference>
<dbReference type="FunFam" id="2.30.30.30:FF:000003">
    <property type="entry name" value="Elongation factor P"/>
    <property type="match status" value="1"/>
</dbReference>
<dbReference type="FunFam" id="2.40.50.140:FF:000004">
    <property type="entry name" value="Elongation factor P"/>
    <property type="match status" value="1"/>
</dbReference>
<dbReference type="FunFam" id="2.40.50.140:FF:000009">
    <property type="entry name" value="Elongation factor P"/>
    <property type="match status" value="1"/>
</dbReference>
<dbReference type="Gene3D" id="2.30.30.30">
    <property type="match status" value="1"/>
</dbReference>
<dbReference type="Gene3D" id="2.40.50.140">
    <property type="entry name" value="Nucleic acid-binding proteins"/>
    <property type="match status" value="2"/>
</dbReference>
<dbReference type="HAMAP" id="MF_00141">
    <property type="entry name" value="EF_P"/>
    <property type="match status" value="1"/>
</dbReference>
<dbReference type="InterPro" id="IPR015365">
    <property type="entry name" value="Elong-fact-P_C"/>
</dbReference>
<dbReference type="InterPro" id="IPR012340">
    <property type="entry name" value="NA-bd_OB-fold"/>
</dbReference>
<dbReference type="InterPro" id="IPR014722">
    <property type="entry name" value="Rib_uL2_dom2"/>
</dbReference>
<dbReference type="InterPro" id="IPR020599">
    <property type="entry name" value="Transl_elong_fac_P/YeiP"/>
</dbReference>
<dbReference type="InterPro" id="IPR013185">
    <property type="entry name" value="Transl_elong_KOW-like"/>
</dbReference>
<dbReference type="InterPro" id="IPR001059">
    <property type="entry name" value="Transl_elong_P/YeiP_cen"/>
</dbReference>
<dbReference type="InterPro" id="IPR013852">
    <property type="entry name" value="Transl_elong_P/YeiP_CS"/>
</dbReference>
<dbReference type="InterPro" id="IPR011768">
    <property type="entry name" value="Transl_elongation_fac_P"/>
</dbReference>
<dbReference type="InterPro" id="IPR008991">
    <property type="entry name" value="Translation_prot_SH3-like_sf"/>
</dbReference>
<dbReference type="NCBIfam" id="TIGR00038">
    <property type="entry name" value="efp"/>
    <property type="match status" value="1"/>
</dbReference>
<dbReference type="NCBIfam" id="NF001810">
    <property type="entry name" value="PRK00529.1"/>
    <property type="match status" value="1"/>
</dbReference>
<dbReference type="PANTHER" id="PTHR30053">
    <property type="entry name" value="ELONGATION FACTOR P"/>
    <property type="match status" value="1"/>
</dbReference>
<dbReference type="PANTHER" id="PTHR30053:SF12">
    <property type="entry name" value="ELONGATION FACTOR P (EF-P) FAMILY PROTEIN"/>
    <property type="match status" value="1"/>
</dbReference>
<dbReference type="Pfam" id="PF01132">
    <property type="entry name" value="EFP"/>
    <property type="match status" value="1"/>
</dbReference>
<dbReference type="Pfam" id="PF08207">
    <property type="entry name" value="EFP_N"/>
    <property type="match status" value="1"/>
</dbReference>
<dbReference type="Pfam" id="PF09285">
    <property type="entry name" value="Elong-fact-P_C"/>
    <property type="match status" value="1"/>
</dbReference>
<dbReference type="PIRSF" id="PIRSF005901">
    <property type="entry name" value="EF-P"/>
    <property type="match status" value="1"/>
</dbReference>
<dbReference type="SMART" id="SM01185">
    <property type="entry name" value="EFP"/>
    <property type="match status" value="1"/>
</dbReference>
<dbReference type="SMART" id="SM00841">
    <property type="entry name" value="Elong-fact-P_C"/>
    <property type="match status" value="1"/>
</dbReference>
<dbReference type="SUPFAM" id="SSF50249">
    <property type="entry name" value="Nucleic acid-binding proteins"/>
    <property type="match status" value="2"/>
</dbReference>
<dbReference type="SUPFAM" id="SSF50104">
    <property type="entry name" value="Translation proteins SH3-like domain"/>
    <property type="match status" value="1"/>
</dbReference>
<dbReference type="PROSITE" id="PS01275">
    <property type="entry name" value="EFP"/>
    <property type="match status" value="1"/>
</dbReference>
<sequence>MISSNDFRTGTTIELDGQVWRVVEFLHVKPGKGSAFVRTKLKSVQSGNVVEKTFRAGESVQQAILEKSNLQHTYVESGDYVFMDMTSFEETRLSSEQIGKGSKYLKEGMEVNVILHNGKVLEVELPISITLKVTETDPGVKGDTASGGTKPAILETGAQVMVPLFISVGEMIKVDTRNDSYLGREN</sequence>
<name>EFP_PROM9</name>
<evidence type="ECO:0000255" key="1">
    <source>
        <dbReference type="HAMAP-Rule" id="MF_00141"/>
    </source>
</evidence>
<reference key="1">
    <citation type="journal article" date="2006" name="Science">
        <title>Genomic islands and the ecology and evolution of Prochlorococcus.</title>
        <authorList>
            <person name="Coleman M.L."/>
            <person name="Sullivan M.B."/>
            <person name="Martiny A.C."/>
            <person name="Steglich C."/>
            <person name="Barry K."/>
            <person name="Delong E.F."/>
            <person name="Chisholm S.W."/>
        </authorList>
    </citation>
    <scope>NUCLEOTIDE SEQUENCE [LARGE SCALE GENOMIC DNA]</scope>
    <source>
        <strain>MIT 9312</strain>
    </source>
</reference>
<feature type="chain" id="PRO_1000010807" description="Elongation factor P">
    <location>
        <begin position="1"/>
        <end position="186"/>
    </location>
</feature>
<keyword id="KW-0963">Cytoplasm</keyword>
<keyword id="KW-0251">Elongation factor</keyword>
<keyword id="KW-0648">Protein biosynthesis</keyword>
<proteinExistence type="inferred from homology"/>
<comment type="function">
    <text evidence="1">Involved in peptide bond synthesis. Stimulates efficient translation and peptide-bond synthesis on native or reconstituted 70S ribosomes in vitro. Probably functions indirectly by altering the affinity of the ribosome for aminoacyl-tRNA, thus increasing their reactivity as acceptors for peptidyl transferase.</text>
</comment>
<comment type="pathway">
    <text evidence="1">Protein biosynthesis; polypeptide chain elongation.</text>
</comment>
<comment type="subcellular location">
    <subcellularLocation>
        <location evidence="1">Cytoplasm</location>
    </subcellularLocation>
</comment>
<comment type="similarity">
    <text evidence="1">Belongs to the elongation factor P family.</text>
</comment>
<protein>
    <recommendedName>
        <fullName evidence="1">Elongation factor P</fullName>
        <shortName evidence="1">EF-P</shortName>
    </recommendedName>
</protein>
<organism>
    <name type="scientific">Prochlorococcus marinus (strain MIT 9312)</name>
    <dbReference type="NCBI Taxonomy" id="74546"/>
    <lineage>
        <taxon>Bacteria</taxon>
        <taxon>Bacillati</taxon>
        <taxon>Cyanobacteriota</taxon>
        <taxon>Cyanophyceae</taxon>
        <taxon>Synechococcales</taxon>
        <taxon>Prochlorococcaceae</taxon>
        <taxon>Prochlorococcus</taxon>
    </lineage>
</organism>
<accession>Q31DF8</accession>
<gene>
    <name evidence="1" type="primary">efp</name>
    <name type="ordered locus">PMT9312_0026</name>
</gene>